<reference key="1">
    <citation type="journal article" date="2003" name="Nature">
        <title>The genome sequence of Bacillus anthracis Ames and comparison to closely related bacteria.</title>
        <authorList>
            <person name="Read T.D."/>
            <person name="Peterson S.N."/>
            <person name="Tourasse N.J."/>
            <person name="Baillie L.W."/>
            <person name="Paulsen I.T."/>
            <person name="Nelson K.E."/>
            <person name="Tettelin H."/>
            <person name="Fouts D.E."/>
            <person name="Eisen J.A."/>
            <person name="Gill S.R."/>
            <person name="Holtzapple E.K."/>
            <person name="Okstad O.A."/>
            <person name="Helgason E."/>
            <person name="Rilstone J."/>
            <person name="Wu M."/>
            <person name="Kolonay J.F."/>
            <person name="Beanan M.J."/>
            <person name="Dodson R.J."/>
            <person name="Brinkac L.M."/>
            <person name="Gwinn M.L."/>
            <person name="DeBoy R.T."/>
            <person name="Madpu R."/>
            <person name="Daugherty S.C."/>
            <person name="Durkin A.S."/>
            <person name="Haft D.H."/>
            <person name="Nelson W.C."/>
            <person name="Peterson J.D."/>
            <person name="Pop M."/>
            <person name="Khouri H.M."/>
            <person name="Radune D."/>
            <person name="Benton J.L."/>
            <person name="Mahamoud Y."/>
            <person name="Jiang L."/>
            <person name="Hance I.R."/>
            <person name="Weidman J.F."/>
            <person name="Berry K.J."/>
            <person name="Plaut R.D."/>
            <person name="Wolf A.M."/>
            <person name="Watkins K.L."/>
            <person name="Nierman W.C."/>
            <person name="Hazen A."/>
            <person name="Cline R.T."/>
            <person name="Redmond C."/>
            <person name="Thwaite J.E."/>
            <person name="White O."/>
            <person name="Salzberg S.L."/>
            <person name="Thomason B."/>
            <person name="Friedlander A.M."/>
            <person name="Koehler T.M."/>
            <person name="Hanna P.C."/>
            <person name="Kolstoe A.-B."/>
            <person name="Fraser C.M."/>
        </authorList>
    </citation>
    <scope>NUCLEOTIDE SEQUENCE [LARGE SCALE GENOMIC DNA]</scope>
    <source>
        <strain>Ames / isolate Porton</strain>
    </source>
</reference>
<reference key="2">
    <citation type="submission" date="2004-01" db="EMBL/GenBank/DDBJ databases">
        <title>Complete genome sequence of Bacillus anthracis Sterne.</title>
        <authorList>
            <person name="Brettin T.S."/>
            <person name="Bruce D."/>
            <person name="Challacombe J.F."/>
            <person name="Gilna P."/>
            <person name="Han C."/>
            <person name="Hill K."/>
            <person name="Hitchcock P."/>
            <person name="Jackson P."/>
            <person name="Keim P."/>
            <person name="Longmire J."/>
            <person name="Lucas S."/>
            <person name="Okinaka R."/>
            <person name="Richardson P."/>
            <person name="Rubin E."/>
            <person name="Tice H."/>
        </authorList>
    </citation>
    <scope>NUCLEOTIDE SEQUENCE [LARGE SCALE GENOMIC DNA]</scope>
    <source>
        <strain>Sterne</strain>
    </source>
</reference>
<reference key="3">
    <citation type="journal article" date="2009" name="J. Bacteriol.">
        <title>The complete genome sequence of Bacillus anthracis Ames 'Ancestor'.</title>
        <authorList>
            <person name="Ravel J."/>
            <person name="Jiang L."/>
            <person name="Stanley S.T."/>
            <person name="Wilson M.R."/>
            <person name="Decker R.S."/>
            <person name="Read T.D."/>
            <person name="Worsham P."/>
            <person name="Keim P.S."/>
            <person name="Salzberg S.L."/>
            <person name="Fraser-Liggett C.M."/>
            <person name="Rasko D.A."/>
        </authorList>
    </citation>
    <scope>NUCLEOTIDE SEQUENCE [LARGE SCALE GENOMIC DNA]</scope>
    <source>
        <strain>Ames ancestor</strain>
    </source>
</reference>
<name>COAW_BACAN</name>
<gene>
    <name evidence="1" type="primary">coaW</name>
    <name type="ordered locus">BA_2901</name>
    <name type="ordered locus">GBAA_2901</name>
    <name type="ordered locus">BAS2702</name>
</gene>
<organism>
    <name type="scientific">Bacillus anthracis</name>
    <dbReference type="NCBI Taxonomy" id="1392"/>
    <lineage>
        <taxon>Bacteria</taxon>
        <taxon>Bacillati</taxon>
        <taxon>Bacillota</taxon>
        <taxon>Bacilli</taxon>
        <taxon>Bacillales</taxon>
        <taxon>Bacillaceae</taxon>
        <taxon>Bacillus</taxon>
        <taxon>Bacillus cereus group</taxon>
    </lineage>
</organism>
<protein>
    <recommendedName>
        <fullName evidence="1">Type II pantothenate kinase</fullName>
        <ecNumber evidence="1">2.7.1.33</ecNumber>
    </recommendedName>
    <alternativeName>
        <fullName evidence="1">PanK-II</fullName>
    </alternativeName>
    <alternativeName>
        <fullName evidence="1">Pantothenic acid kinase</fullName>
    </alternativeName>
</protein>
<evidence type="ECO:0000255" key="1">
    <source>
        <dbReference type="HAMAP-Rule" id="MF_01273"/>
    </source>
</evidence>
<sequence length="276" mass="30060">MESTIGIDAGGTLTKIAYLNKKMQLAFEKVYSNEQNKIIDWLKNQTGIKQICITGGKAKQLQQLLSASYKIVELNEFEATLVGVRYILKKEKYDINNFVLTNIGTGTSIHYIYNDQYIRAGGTGVGGGTIMGLSKLLTNIDHFEDVIPLTKVGSRKELDITVGDIYGGILSPIDNSLTASNFGKAAITDSNYNSSDILATIQGLVGEVVTALSLQFAETKNIDHIIYIGSTLCNNIHLQNIISSYTKYQNKTPIFLRDGGNSGAIGALLYATNKKS</sequence>
<proteinExistence type="inferred from homology"/>
<dbReference type="EC" id="2.7.1.33" evidence="1"/>
<dbReference type="EMBL" id="AE016879">
    <property type="protein sequence ID" value="AAP26726.1"/>
    <property type="molecule type" value="Genomic_DNA"/>
</dbReference>
<dbReference type="EMBL" id="AE017225">
    <property type="protein sequence ID" value="AAT55011.1"/>
    <property type="molecule type" value="Genomic_DNA"/>
</dbReference>
<dbReference type="EMBL" id="AE017334">
    <property type="protein sequence ID" value="AAT32018.1"/>
    <property type="molecule type" value="Genomic_DNA"/>
</dbReference>
<dbReference type="RefSeq" id="NP_845240.1">
    <property type="nucleotide sequence ID" value="NC_003997.3"/>
</dbReference>
<dbReference type="RefSeq" id="WP_000446264.1">
    <property type="nucleotide sequence ID" value="NZ_WXXJ01000007.1"/>
</dbReference>
<dbReference type="RefSeq" id="YP_028960.1">
    <property type="nucleotide sequence ID" value="NC_005945.1"/>
</dbReference>
<dbReference type="SMR" id="Q81PB2"/>
<dbReference type="STRING" id="261594.GBAA_2901"/>
<dbReference type="DNASU" id="1088439"/>
<dbReference type="GeneID" id="45022724"/>
<dbReference type="KEGG" id="ban:BA_2901"/>
<dbReference type="KEGG" id="bar:GBAA_2901"/>
<dbReference type="KEGG" id="bat:BAS2702"/>
<dbReference type="PATRIC" id="fig|198094.11.peg.2881"/>
<dbReference type="eggNOG" id="COG5146">
    <property type="taxonomic scope" value="Bacteria"/>
</dbReference>
<dbReference type="HOGENOM" id="CLU_087521_1_0_9"/>
<dbReference type="OMA" id="VKHIYKD"/>
<dbReference type="OrthoDB" id="358216at2"/>
<dbReference type="UniPathway" id="UPA00241">
    <property type="reaction ID" value="UER00352"/>
</dbReference>
<dbReference type="Proteomes" id="UP000000427">
    <property type="component" value="Chromosome"/>
</dbReference>
<dbReference type="Proteomes" id="UP000000594">
    <property type="component" value="Chromosome"/>
</dbReference>
<dbReference type="GO" id="GO:0005829">
    <property type="term" value="C:cytosol"/>
    <property type="evidence" value="ECO:0007669"/>
    <property type="project" value="TreeGrafter"/>
</dbReference>
<dbReference type="GO" id="GO:0005524">
    <property type="term" value="F:ATP binding"/>
    <property type="evidence" value="ECO:0007669"/>
    <property type="project" value="UniProtKB-UniRule"/>
</dbReference>
<dbReference type="GO" id="GO:0004594">
    <property type="term" value="F:pantothenate kinase activity"/>
    <property type="evidence" value="ECO:0007669"/>
    <property type="project" value="UniProtKB-UniRule"/>
</dbReference>
<dbReference type="GO" id="GO:0015937">
    <property type="term" value="P:coenzyme A biosynthetic process"/>
    <property type="evidence" value="ECO:0007669"/>
    <property type="project" value="UniProtKB-UniRule"/>
</dbReference>
<dbReference type="CDD" id="cd24085">
    <property type="entry name" value="ASKHA_NBD_PanK-II_bac"/>
    <property type="match status" value="1"/>
</dbReference>
<dbReference type="Gene3D" id="3.30.420.40">
    <property type="match status" value="3"/>
</dbReference>
<dbReference type="HAMAP" id="MF_01273">
    <property type="entry name" value="Pantothen_kinase_2"/>
    <property type="match status" value="1"/>
</dbReference>
<dbReference type="InterPro" id="IPR043129">
    <property type="entry name" value="ATPase_NBD"/>
</dbReference>
<dbReference type="InterPro" id="IPR004567">
    <property type="entry name" value="Type_II_PanK"/>
</dbReference>
<dbReference type="InterPro" id="IPR011602">
    <property type="entry name" value="Type_II_PanK_bac"/>
</dbReference>
<dbReference type="NCBIfam" id="TIGR00555">
    <property type="entry name" value="panK_eukar"/>
    <property type="match status" value="1"/>
</dbReference>
<dbReference type="NCBIfam" id="NF009842">
    <property type="entry name" value="PRK13317.1"/>
    <property type="match status" value="1"/>
</dbReference>
<dbReference type="PANTHER" id="PTHR12280:SF20">
    <property type="entry name" value="4'-PHOSPHOPANTETHEINE PHOSPHATASE"/>
    <property type="match status" value="1"/>
</dbReference>
<dbReference type="PANTHER" id="PTHR12280">
    <property type="entry name" value="PANTOTHENATE KINASE"/>
    <property type="match status" value="1"/>
</dbReference>
<dbReference type="Pfam" id="PF03630">
    <property type="entry name" value="Fumble"/>
    <property type="match status" value="1"/>
</dbReference>
<dbReference type="PIRSF" id="PIRSF036940">
    <property type="entry name" value="PanK_bac_aCoA"/>
    <property type="match status" value="1"/>
</dbReference>
<dbReference type="SUPFAM" id="SSF53067">
    <property type="entry name" value="Actin-like ATPase domain"/>
    <property type="match status" value="1"/>
</dbReference>
<feature type="chain" id="PRO_0000261337" description="Type II pantothenate kinase">
    <location>
        <begin position="1"/>
        <end position="276"/>
    </location>
</feature>
<feature type="active site" description="Proton acceptor" evidence="1">
    <location>
        <position position="76"/>
    </location>
</feature>
<feature type="binding site" evidence="1">
    <location>
        <begin position="8"/>
        <end position="15"/>
    </location>
    <ligand>
        <name>ATP</name>
        <dbReference type="ChEBI" id="CHEBI:30616"/>
    </ligand>
</feature>
<feature type="binding site" evidence="1">
    <location>
        <position position="105"/>
    </location>
    <ligand>
        <name>ATP</name>
        <dbReference type="ChEBI" id="CHEBI:30616"/>
    </ligand>
</feature>
<feature type="binding site" evidence="1">
    <location>
        <begin position="127"/>
        <end position="131"/>
    </location>
    <ligand>
        <name>ATP</name>
        <dbReference type="ChEBI" id="CHEBI:30616"/>
    </ligand>
</feature>
<feature type="binding site" evidence="1">
    <location>
        <position position="143"/>
    </location>
    <ligand>
        <name>ATP</name>
        <dbReference type="ChEBI" id="CHEBI:30616"/>
    </ligand>
</feature>
<feature type="binding site" evidence="1">
    <location>
        <position position="230"/>
    </location>
    <ligand>
        <name>ATP</name>
        <dbReference type="ChEBI" id="CHEBI:30616"/>
    </ligand>
</feature>
<comment type="function">
    <text evidence="1">Catalyzes the phosphorylation of pantothenate (Pan), the first step in CoA biosynthesis.</text>
</comment>
<comment type="catalytic activity">
    <reaction evidence="1">
        <text>(R)-pantothenate + ATP = (R)-4'-phosphopantothenate + ADP + H(+)</text>
        <dbReference type="Rhea" id="RHEA:16373"/>
        <dbReference type="ChEBI" id="CHEBI:10986"/>
        <dbReference type="ChEBI" id="CHEBI:15378"/>
        <dbReference type="ChEBI" id="CHEBI:29032"/>
        <dbReference type="ChEBI" id="CHEBI:30616"/>
        <dbReference type="ChEBI" id="CHEBI:456216"/>
        <dbReference type="EC" id="2.7.1.33"/>
    </reaction>
</comment>
<comment type="pathway">
    <text evidence="1">Cofactor biosynthesis; coenzyme A biosynthesis; CoA from (R)-pantothenate: step 1/5.</text>
</comment>
<comment type="subunit">
    <text evidence="1">Homodimer.</text>
</comment>
<comment type="subcellular location">
    <subcellularLocation>
        <location evidence="1">Cytoplasm</location>
    </subcellularLocation>
</comment>
<comment type="similarity">
    <text evidence="1">Belongs to the type II pantothenate kinase family.</text>
</comment>
<accession>Q81PB2</accession>
<accession>Q6HXH8</accession>
<accession>Q6KRK2</accession>
<keyword id="KW-0067">ATP-binding</keyword>
<keyword id="KW-0173">Coenzyme A biosynthesis</keyword>
<keyword id="KW-0963">Cytoplasm</keyword>
<keyword id="KW-0418">Kinase</keyword>
<keyword id="KW-0547">Nucleotide-binding</keyword>
<keyword id="KW-1185">Reference proteome</keyword>
<keyword id="KW-0808">Transferase</keyword>